<evidence type="ECO:0000250" key="1"/>
<evidence type="ECO:0000255" key="2">
    <source>
        <dbReference type="PROSITE-ProRule" id="PRU00047"/>
    </source>
</evidence>
<evidence type="ECO:0000255" key="3">
    <source>
        <dbReference type="PROSITE-ProRule" id="PRU00117"/>
    </source>
</evidence>
<evidence type="ECO:0000256" key="4">
    <source>
        <dbReference type="SAM" id="MobiDB-lite"/>
    </source>
</evidence>
<evidence type="ECO:0000305" key="5"/>
<reference key="1">
    <citation type="journal article" date="2004" name="Proc. Natl. Acad. Sci. U.S.A.">
        <title>The diploid genome sequence of Candida albicans.</title>
        <authorList>
            <person name="Jones T."/>
            <person name="Federspiel N.A."/>
            <person name="Chibana H."/>
            <person name="Dungan J."/>
            <person name="Kalman S."/>
            <person name="Magee B.B."/>
            <person name="Newport G."/>
            <person name="Thorstenson Y.R."/>
            <person name="Agabian N."/>
            <person name="Magee P.T."/>
            <person name="Davis R.W."/>
            <person name="Scherer S."/>
        </authorList>
    </citation>
    <scope>NUCLEOTIDE SEQUENCE [LARGE SCALE GENOMIC DNA]</scope>
    <source>
        <strain>SC5314 / ATCC MYA-2876</strain>
    </source>
</reference>
<reference key="2">
    <citation type="journal article" date="2007" name="Genome Biol.">
        <title>Assembly of the Candida albicans genome into sixteen supercontigs aligned on the eight chromosomes.</title>
        <authorList>
            <person name="van het Hoog M."/>
            <person name="Rast T.J."/>
            <person name="Martchenko M."/>
            <person name="Grindle S."/>
            <person name="Dignard D."/>
            <person name="Hogues H."/>
            <person name="Cuomo C."/>
            <person name="Berriman M."/>
            <person name="Scherer S."/>
            <person name="Magee B.B."/>
            <person name="Whiteway M."/>
            <person name="Chibana H."/>
            <person name="Nantel A."/>
            <person name="Magee P.T."/>
        </authorList>
    </citation>
    <scope>GENOME REANNOTATION</scope>
    <source>
        <strain>SC5314 / ATCC MYA-2876</strain>
    </source>
</reference>
<reference key="3">
    <citation type="journal article" date="2013" name="Genome Biol.">
        <title>Assembly of a phased diploid Candida albicans genome facilitates allele-specific measurements and provides a simple model for repeat and indel structure.</title>
        <authorList>
            <person name="Muzzey D."/>
            <person name="Schwartz K."/>
            <person name="Weissman J.S."/>
            <person name="Sherlock G."/>
        </authorList>
    </citation>
    <scope>NUCLEOTIDE SEQUENCE [LARGE SCALE GENOMIC DNA]</scope>
    <scope>GENOME REANNOTATION</scope>
    <source>
        <strain>SC5314 / ATCC MYA-2876</strain>
    </source>
</reference>
<name>BBP_CANAL</name>
<comment type="function">
    <text evidence="1">Necessary for the splicing of pre-mRNA. Has a role in the recognition of the branch site (5'-UACUAAC-3'), the pyrimidine tract and the 3'-splice site at the 3'-end of introns (By similarity).</text>
</comment>
<comment type="subcellular location">
    <subcellularLocation>
        <location evidence="1">Nucleus</location>
    </subcellularLocation>
</comment>
<comment type="similarity">
    <text evidence="5">Belongs to the BBP/SF1 family.</text>
</comment>
<gene>
    <name type="primary">BBP</name>
    <name type="synonym">MSL5</name>
    <name type="ordered locus">CAALFM_C303300CA</name>
    <name type="ORF">CaO19.329</name>
    <name type="ORF">CaO19.7961</name>
</gene>
<protein>
    <recommendedName>
        <fullName>Branchpoint-bridging protein</fullName>
    </recommendedName>
</protein>
<sequence length="455" mass="50078">MSNRGRQPSGPPPSRKRETKWSGKPKRYANFGAQSFDTVITGHLTQEQLDAYQRYFRIEEISNFLSVAKQQHKSIVDVLPSAKVDETDHYKRDPSPPPKYDKNGNRTNTRERRVTEALEKERHELVELAASSIKNYMIPSNYRRPSRTVERLYVPVKDYPDINFVGFLIGPRGNTLKKLQEDSGARLQIRGKGSVKEGKSSDGFGSSQTGTDIQDDLHVLITADSPLKISKAVKLVNEIIDKLIFSPQGMNFMKRDQLKELAVLNGTLRETKPFDPEAHEKKQQQQMDITKIVCKICGNIGHIARDCKQNNGKRPLDDNAENEPTTINKKARTDVPPPPPPPPPPAPPSSSTEISKQVPPPPPPPPPPAPSAAASGFATTENYKQGLVPPPPPPPPPPPPPVRSALVNFENNSKVLLTKEKEESGSSELKNTGESSSSSSGVPPSPPPPSSNVPR</sequence>
<dbReference type="EMBL" id="CP017625">
    <property type="protein sequence ID" value="AOW28359.1"/>
    <property type="molecule type" value="Genomic_DNA"/>
</dbReference>
<dbReference type="RefSeq" id="XP_720024.1">
    <property type="nucleotide sequence ID" value="XM_714931.1"/>
</dbReference>
<dbReference type="SMR" id="Q5AED9"/>
<dbReference type="FunCoup" id="Q5AED9">
    <property type="interactions" value="51"/>
</dbReference>
<dbReference type="STRING" id="237561.Q5AED9"/>
<dbReference type="EnsemblFungi" id="C3_03300C_A-T">
    <property type="protein sequence ID" value="C3_03300C_A-T-p1"/>
    <property type="gene ID" value="C3_03300C_A"/>
</dbReference>
<dbReference type="GeneID" id="3638361"/>
<dbReference type="KEGG" id="cal:CAALFM_C303300CA"/>
<dbReference type="CGD" id="CAL0000178990">
    <property type="gene designation" value="MSL5"/>
</dbReference>
<dbReference type="VEuPathDB" id="FungiDB:C3_03300C_A"/>
<dbReference type="eggNOG" id="KOG0119">
    <property type="taxonomic scope" value="Eukaryota"/>
</dbReference>
<dbReference type="HOGENOM" id="CLU_016864_1_0_1"/>
<dbReference type="InParanoid" id="Q5AED9"/>
<dbReference type="OrthoDB" id="6777263at2759"/>
<dbReference type="PRO" id="PR:Q5AED9"/>
<dbReference type="Proteomes" id="UP000000559">
    <property type="component" value="Chromosome 3"/>
</dbReference>
<dbReference type="GO" id="GO:0005634">
    <property type="term" value="C:nucleus"/>
    <property type="evidence" value="ECO:0000318"/>
    <property type="project" value="GO_Central"/>
</dbReference>
<dbReference type="GO" id="GO:0005681">
    <property type="term" value="C:spliceosomal complex"/>
    <property type="evidence" value="ECO:0007669"/>
    <property type="project" value="UniProtKB-KW"/>
</dbReference>
<dbReference type="GO" id="GO:0003729">
    <property type="term" value="F:mRNA binding"/>
    <property type="evidence" value="ECO:0000318"/>
    <property type="project" value="GO_Central"/>
</dbReference>
<dbReference type="GO" id="GO:0008270">
    <property type="term" value="F:zinc ion binding"/>
    <property type="evidence" value="ECO:0007669"/>
    <property type="project" value="UniProtKB-KW"/>
</dbReference>
<dbReference type="GO" id="GO:0044180">
    <property type="term" value="P:filamentous growth of a unicellular organism"/>
    <property type="evidence" value="ECO:0000315"/>
    <property type="project" value="CGD"/>
</dbReference>
<dbReference type="GO" id="GO:0006397">
    <property type="term" value="P:mRNA processing"/>
    <property type="evidence" value="ECO:0007669"/>
    <property type="project" value="UniProtKB-KW"/>
</dbReference>
<dbReference type="GO" id="GO:0048024">
    <property type="term" value="P:regulation of mRNA splicing, via spliceosome"/>
    <property type="evidence" value="ECO:0000318"/>
    <property type="project" value="GO_Central"/>
</dbReference>
<dbReference type="GO" id="GO:0008380">
    <property type="term" value="P:RNA splicing"/>
    <property type="evidence" value="ECO:0007669"/>
    <property type="project" value="UniProtKB-KW"/>
</dbReference>
<dbReference type="CDD" id="cd02395">
    <property type="entry name" value="KH-I_BBP"/>
    <property type="match status" value="1"/>
</dbReference>
<dbReference type="Gene3D" id="6.10.140.1790">
    <property type="match status" value="1"/>
</dbReference>
<dbReference type="Gene3D" id="3.30.1370.10">
    <property type="entry name" value="K Homology domain, type 1"/>
    <property type="match status" value="1"/>
</dbReference>
<dbReference type="Gene3D" id="4.10.60.10">
    <property type="entry name" value="Zinc finger, CCHC-type"/>
    <property type="match status" value="1"/>
</dbReference>
<dbReference type="InterPro" id="IPR045071">
    <property type="entry name" value="BBP-like"/>
</dbReference>
<dbReference type="InterPro" id="IPR055256">
    <property type="entry name" value="KH_1_KHDC4/BBP-like"/>
</dbReference>
<dbReference type="InterPro" id="IPR004087">
    <property type="entry name" value="KH_dom"/>
</dbReference>
<dbReference type="InterPro" id="IPR036612">
    <property type="entry name" value="KH_dom_type_1_sf"/>
</dbReference>
<dbReference type="InterPro" id="IPR032570">
    <property type="entry name" value="SF1-HH"/>
</dbReference>
<dbReference type="InterPro" id="IPR047086">
    <property type="entry name" value="SF1-HH_sf"/>
</dbReference>
<dbReference type="InterPro" id="IPR001878">
    <property type="entry name" value="Znf_CCHC"/>
</dbReference>
<dbReference type="InterPro" id="IPR036875">
    <property type="entry name" value="Znf_CCHC_sf"/>
</dbReference>
<dbReference type="PANTHER" id="PTHR11208">
    <property type="entry name" value="RNA-BINDING PROTEIN RELATED"/>
    <property type="match status" value="1"/>
</dbReference>
<dbReference type="PANTHER" id="PTHR11208:SF45">
    <property type="entry name" value="SPLICING FACTOR 1"/>
    <property type="match status" value="1"/>
</dbReference>
<dbReference type="Pfam" id="PF22675">
    <property type="entry name" value="KH-I_KHDC4-BBP"/>
    <property type="match status" value="1"/>
</dbReference>
<dbReference type="Pfam" id="PF16275">
    <property type="entry name" value="SF1-HH"/>
    <property type="match status" value="1"/>
</dbReference>
<dbReference type="Pfam" id="PF00098">
    <property type="entry name" value="zf-CCHC"/>
    <property type="match status" value="1"/>
</dbReference>
<dbReference type="SMART" id="SM00322">
    <property type="entry name" value="KH"/>
    <property type="match status" value="1"/>
</dbReference>
<dbReference type="SMART" id="SM00343">
    <property type="entry name" value="ZnF_C2HC"/>
    <property type="match status" value="1"/>
</dbReference>
<dbReference type="SUPFAM" id="SSF54791">
    <property type="entry name" value="Eukaryotic type KH-domain (KH-domain type I)"/>
    <property type="match status" value="1"/>
</dbReference>
<dbReference type="SUPFAM" id="SSF57756">
    <property type="entry name" value="Retrovirus zinc finger-like domains"/>
    <property type="match status" value="1"/>
</dbReference>
<dbReference type="PROSITE" id="PS50084">
    <property type="entry name" value="KH_TYPE_1"/>
    <property type="match status" value="1"/>
</dbReference>
<dbReference type="PROSITE" id="PS50158">
    <property type="entry name" value="ZF_CCHC"/>
    <property type="match status" value="1"/>
</dbReference>
<feature type="chain" id="PRO_0000256145" description="Branchpoint-bridging protein">
    <location>
        <begin position="1"/>
        <end position="455"/>
    </location>
</feature>
<feature type="domain" description="KH" evidence="3">
    <location>
        <begin position="153"/>
        <end position="236"/>
    </location>
</feature>
<feature type="zinc finger region" description="CCHC-type" evidence="2">
    <location>
        <begin position="292"/>
        <end position="309"/>
    </location>
</feature>
<feature type="region of interest" description="Disordered" evidence="4">
    <location>
        <begin position="1"/>
        <end position="28"/>
    </location>
</feature>
<feature type="region of interest" description="Disordered" evidence="4">
    <location>
        <begin position="86"/>
        <end position="110"/>
    </location>
</feature>
<feature type="region of interest" description="Disordered" evidence="4">
    <location>
        <begin position="189"/>
        <end position="210"/>
    </location>
</feature>
<feature type="region of interest" description="Disordered" evidence="4">
    <location>
        <begin position="305"/>
        <end position="455"/>
    </location>
</feature>
<feature type="compositionally biased region" description="Pro residues" evidence="4">
    <location>
        <begin position="335"/>
        <end position="348"/>
    </location>
</feature>
<feature type="compositionally biased region" description="Pro residues" evidence="4">
    <location>
        <begin position="358"/>
        <end position="370"/>
    </location>
</feature>
<feature type="compositionally biased region" description="Pro residues" evidence="4">
    <location>
        <begin position="388"/>
        <end position="402"/>
    </location>
</feature>
<feature type="compositionally biased region" description="Low complexity" evidence="4">
    <location>
        <begin position="426"/>
        <end position="442"/>
    </location>
</feature>
<feature type="compositionally biased region" description="Pro residues" evidence="4">
    <location>
        <begin position="443"/>
        <end position="455"/>
    </location>
</feature>
<keyword id="KW-0479">Metal-binding</keyword>
<keyword id="KW-0507">mRNA processing</keyword>
<keyword id="KW-0508">mRNA splicing</keyword>
<keyword id="KW-0539">Nucleus</keyword>
<keyword id="KW-1185">Reference proteome</keyword>
<keyword id="KW-0694">RNA-binding</keyword>
<keyword id="KW-0747">Spliceosome</keyword>
<keyword id="KW-0862">Zinc</keyword>
<keyword id="KW-0863">Zinc-finger</keyword>
<proteinExistence type="inferred from homology"/>
<organism>
    <name type="scientific">Candida albicans (strain SC5314 / ATCC MYA-2876)</name>
    <name type="common">Yeast</name>
    <dbReference type="NCBI Taxonomy" id="237561"/>
    <lineage>
        <taxon>Eukaryota</taxon>
        <taxon>Fungi</taxon>
        <taxon>Dikarya</taxon>
        <taxon>Ascomycota</taxon>
        <taxon>Saccharomycotina</taxon>
        <taxon>Pichiomycetes</taxon>
        <taxon>Debaryomycetaceae</taxon>
        <taxon>Candida/Lodderomyces clade</taxon>
        <taxon>Candida</taxon>
    </lineage>
</organism>
<accession>Q5AED9</accession>
<accession>A0A1D8PJM2</accession>